<dbReference type="EMBL" id="CP001396">
    <property type="protein sequence ID" value="ACR64821.1"/>
    <property type="molecule type" value="Genomic_DNA"/>
</dbReference>
<dbReference type="RefSeq" id="WP_000202902.1">
    <property type="nucleotide sequence ID" value="NC_012759.1"/>
</dbReference>
<dbReference type="SMR" id="C5A0W8"/>
<dbReference type="GeneID" id="93777857"/>
<dbReference type="KEGG" id="ebw:BWG_3687"/>
<dbReference type="HOGENOM" id="CLU_127561_0_1_6"/>
<dbReference type="GO" id="GO:0005886">
    <property type="term" value="C:plasma membrane"/>
    <property type="evidence" value="ECO:0007669"/>
    <property type="project" value="UniProtKB-SubCell"/>
</dbReference>
<dbReference type="GO" id="GO:0016036">
    <property type="term" value="P:cellular response to phosphate starvation"/>
    <property type="evidence" value="ECO:0007669"/>
    <property type="project" value="InterPro"/>
</dbReference>
<dbReference type="HAMAP" id="MF_01048">
    <property type="entry name" value="PsiE"/>
    <property type="match status" value="1"/>
</dbReference>
<dbReference type="InterPro" id="IPR009315">
    <property type="entry name" value="P_starv_induced_PsiE"/>
</dbReference>
<dbReference type="InterPro" id="IPR020948">
    <property type="entry name" value="P_starv_induced_PsiE-like"/>
</dbReference>
<dbReference type="NCBIfam" id="NF002764">
    <property type="entry name" value="PRK02833.1-2"/>
    <property type="match status" value="1"/>
</dbReference>
<dbReference type="NCBIfam" id="NF002765">
    <property type="entry name" value="PRK02833.1-3"/>
    <property type="match status" value="1"/>
</dbReference>
<dbReference type="NCBIfam" id="NF002767">
    <property type="entry name" value="PRK02833.1-5"/>
    <property type="match status" value="1"/>
</dbReference>
<dbReference type="PANTHER" id="PTHR37819">
    <property type="entry name" value="PROTEIN PSIE"/>
    <property type="match status" value="1"/>
</dbReference>
<dbReference type="PANTHER" id="PTHR37819:SF1">
    <property type="entry name" value="PROTEIN PSIE"/>
    <property type="match status" value="1"/>
</dbReference>
<dbReference type="Pfam" id="PF06146">
    <property type="entry name" value="PsiE"/>
    <property type="match status" value="1"/>
</dbReference>
<dbReference type="PIRSF" id="PIRSF029598">
    <property type="entry name" value="PsiE"/>
    <property type="match status" value="1"/>
</dbReference>
<name>PSIE_ECOBW</name>
<sequence>MTSLSRPRVEFISTILQTVLNLGLLCLGLILVVFLGKETVHLADVLFAPEQTSKYELVEGLVVYFLYFEFIALIVKYFQSGFHFPLRYFVYIGITAIVRLIIVDHKSPLDVLIYSAAILLLVITLWLCNSKRLKRE</sequence>
<keyword id="KW-0997">Cell inner membrane</keyword>
<keyword id="KW-1003">Cell membrane</keyword>
<keyword id="KW-0472">Membrane</keyword>
<keyword id="KW-0812">Transmembrane</keyword>
<keyword id="KW-1133">Transmembrane helix</keyword>
<accession>C5A0W8</accession>
<organism>
    <name type="scientific">Escherichia coli (strain K12 / MC4100 / BW2952)</name>
    <dbReference type="NCBI Taxonomy" id="595496"/>
    <lineage>
        <taxon>Bacteria</taxon>
        <taxon>Pseudomonadati</taxon>
        <taxon>Pseudomonadota</taxon>
        <taxon>Gammaproteobacteria</taxon>
        <taxon>Enterobacterales</taxon>
        <taxon>Enterobacteriaceae</taxon>
        <taxon>Escherichia</taxon>
    </lineage>
</organism>
<reference key="1">
    <citation type="journal article" date="2009" name="J. Bacteriol.">
        <title>Genomic sequencing reveals regulatory mutations and recombinational events in the widely used MC4100 lineage of Escherichia coli K-12.</title>
        <authorList>
            <person name="Ferenci T."/>
            <person name="Zhou Z."/>
            <person name="Betteridge T."/>
            <person name="Ren Y."/>
            <person name="Liu Y."/>
            <person name="Feng L."/>
            <person name="Reeves P.R."/>
            <person name="Wang L."/>
        </authorList>
    </citation>
    <scope>NUCLEOTIDE SEQUENCE [LARGE SCALE GENOMIC DNA]</scope>
    <source>
        <strain>K12 / MC4100 / BW2952</strain>
    </source>
</reference>
<evidence type="ECO:0000255" key="1">
    <source>
        <dbReference type="HAMAP-Rule" id="MF_01048"/>
    </source>
</evidence>
<gene>
    <name evidence="1" type="primary">psiE</name>
    <name type="ordered locus">BWG_3687</name>
</gene>
<feature type="chain" id="PRO_1000213425" description="Protein PsiE">
    <location>
        <begin position="1"/>
        <end position="136"/>
    </location>
</feature>
<feature type="transmembrane region" description="Helical" evidence="1">
    <location>
        <begin position="15"/>
        <end position="35"/>
    </location>
</feature>
<feature type="transmembrane region" description="Helical" evidence="1">
    <location>
        <begin position="55"/>
        <end position="75"/>
    </location>
</feature>
<feature type="transmembrane region" description="Helical" evidence="1">
    <location>
        <begin position="82"/>
        <end position="102"/>
    </location>
</feature>
<feature type="transmembrane region" description="Helical" evidence="1">
    <location>
        <begin position="108"/>
        <end position="128"/>
    </location>
</feature>
<comment type="subcellular location">
    <subcellularLocation>
        <location evidence="1">Cell inner membrane</location>
        <topology evidence="1">Multi-pass membrane protein</topology>
    </subcellularLocation>
</comment>
<comment type="similarity">
    <text evidence="1">Belongs to the PsiE family.</text>
</comment>
<protein>
    <recommendedName>
        <fullName evidence="1">Protein PsiE</fullName>
    </recommendedName>
</protein>
<proteinExistence type="inferred from homology"/>